<organism>
    <name type="scientific">Alkaliphilus metalliredigens (strain QYMF)</name>
    <dbReference type="NCBI Taxonomy" id="293826"/>
    <lineage>
        <taxon>Bacteria</taxon>
        <taxon>Bacillati</taxon>
        <taxon>Bacillota</taxon>
        <taxon>Clostridia</taxon>
        <taxon>Peptostreptococcales</taxon>
        <taxon>Natronincolaceae</taxon>
        <taxon>Alkaliphilus</taxon>
    </lineage>
</organism>
<sequence>MELLKEQIREVARVEKGNVLKVDSFLNHQLDIPLLNEIGKELKKRFQGEKVDKILTAEVSGIAIAAIAAQYFNVPVVFAKKTQSKNLDQDTYEGEVYSYTKGQAYKIRVSKRYLHEKENILIIDDFLANGEALQGLREIVVQANANLVGAGIVIEKGFQGGGKRLRAENMRIESLAIIDEMNESTLVFRDDKADLKADPKAS</sequence>
<dbReference type="EC" id="2.4.2.22" evidence="1"/>
<dbReference type="EMBL" id="CP000724">
    <property type="protein sequence ID" value="ABR49454.1"/>
    <property type="molecule type" value="Genomic_DNA"/>
</dbReference>
<dbReference type="RefSeq" id="WP_012064419.1">
    <property type="nucleotide sequence ID" value="NC_009633.1"/>
</dbReference>
<dbReference type="SMR" id="A6TTD6"/>
<dbReference type="STRING" id="293826.Amet_3326"/>
<dbReference type="KEGG" id="amt:Amet_3326"/>
<dbReference type="eggNOG" id="COG0503">
    <property type="taxonomic scope" value="Bacteria"/>
</dbReference>
<dbReference type="HOGENOM" id="CLU_099015_0_0_9"/>
<dbReference type="OrthoDB" id="9790678at2"/>
<dbReference type="UniPathway" id="UPA00602">
    <property type="reaction ID" value="UER00658"/>
</dbReference>
<dbReference type="Proteomes" id="UP000001572">
    <property type="component" value="Chromosome"/>
</dbReference>
<dbReference type="GO" id="GO:0005737">
    <property type="term" value="C:cytoplasm"/>
    <property type="evidence" value="ECO:0007669"/>
    <property type="project" value="UniProtKB-SubCell"/>
</dbReference>
<dbReference type="GO" id="GO:0000310">
    <property type="term" value="F:xanthine phosphoribosyltransferase activity"/>
    <property type="evidence" value="ECO:0007669"/>
    <property type="project" value="UniProtKB-UniRule"/>
</dbReference>
<dbReference type="GO" id="GO:0006166">
    <property type="term" value="P:purine ribonucleoside salvage"/>
    <property type="evidence" value="ECO:0007669"/>
    <property type="project" value="UniProtKB-KW"/>
</dbReference>
<dbReference type="GO" id="GO:0046110">
    <property type="term" value="P:xanthine metabolic process"/>
    <property type="evidence" value="ECO:0007669"/>
    <property type="project" value="InterPro"/>
</dbReference>
<dbReference type="GO" id="GO:0032265">
    <property type="term" value="P:XMP salvage"/>
    <property type="evidence" value="ECO:0007669"/>
    <property type="project" value="UniProtKB-UniRule"/>
</dbReference>
<dbReference type="CDD" id="cd06223">
    <property type="entry name" value="PRTases_typeI"/>
    <property type="match status" value="1"/>
</dbReference>
<dbReference type="Gene3D" id="3.40.50.2020">
    <property type="match status" value="1"/>
</dbReference>
<dbReference type="HAMAP" id="MF_01184">
    <property type="entry name" value="XPRTase"/>
    <property type="match status" value="1"/>
</dbReference>
<dbReference type="InterPro" id="IPR000836">
    <property type="entry name" value="PRibTrfase_dom"/>
</dbReference>
<dbReference type="InterPro" id="IPR029057">
    <property type="entry name" value="PRTase-like"/>
</dbReference>
<dbReference type="InterPro" id="IPR050118">
    <property type="entry name" value="Pur/Pyrimidine_PRTase"/>
</dbReference>
<dbReference type="InterPro" id="IPR010079">
    <property type="entry name" value="Xanthine_PRibTrfase"/>
</dbReference>
<dbReference type="NCBIfam" id="NF006671">
    <property type="entry name" value="PRK09219.1"/>
    <property type="match status" value="1"/>
</dbReference>
<dbReference type="NCBIfam" id="TIGR01744">
    <property type="entry name" value="XPRTase"/>
    <property type="match status" value="1"/>
</dbReference>
<dbReference type="PANTHER" id="PTHR43864">
    <property type="entry name" value="HYPOXANTHINE/GUANINE PHOSPHORIBOSYLTRANSFERASE"/>
    <property type="match status" value="1"/>
</dbReference>
<dbReference type="PANTHER" id="PTHR43864:SF1">
    <property type="entry name" value="XANTHINE PHOSPHORIBOSYLTRANSFERASE"/>
    <property type="match status" value="1"/>
</dbReference>
<dbReference type="Pfam" id="PF00156">
    <property type="entry name" value="Pribosyltran"/>
    <property type="match status" value="1"/>
</dbReference>
<dbReference type="SUPFAM" id="SSF53271">
    <property type="entry name" value="PRTase-like"/>
    <property type="match status" value="1"/>
</dbReference>
<name>XPT_ALKMQ</name>
<accession>A6TTD6</accession>
<keyword id="KW-0963">Cytoplasm</keyword>
<keyword id="KW-0328">Glycosyltransferase</keyword>
<keyword id="KW-0660">Purine salvage</keyword>
<keyword id="KW-1185">Reference proteome</keyword>
<keyword id="KW-0808">Transferase</keyword>
<evidence type="ECO:0000255" key="1">
    <source>
        <dbReference type="HAMAP-Rule" id="MF_01184"/>
    </source>
</evidence>
<reference key="1">
    <citation type="journal article" date="2016" name="Genome Announc.">
        <title>Complete genome sequence of Alkaliphilus metalliredigens strain QYMF, an alkaliphilic and metal-reducing bacterium isolated from borax-contaminated leachate ponds.</title>
        <authorList>
            <person name="Hwang C."/>
            <person name="Copeland A."/>
            <person name="Lucas S."/>
            <person name="Lapidus A."/>
            <person name="Barry K."/>
            <person name="Detter J.C."/>
            <person name="Glavina Del Rio T."/>
            <person name="Hammon N."/>
            <person name="Israni S."/>
            <person name="Dalin E."/>
            <person name="Tice H."/>
            <person name="Pitluck S."/>
            <person name="Chertkov O."/>
            <person name="Brettin T."/>
            <person name="Bruce D."/>
            <person name="Han C."/>
            <person name="Schmutz J."/>
            <person name="Larimer F."/>
            <person name="Land M.L."/>
            <person name="Hauser L."/>
            <person name="Kyrpides N."/>
            <person name="Mikhailova N."/>
            <person name="Ye Q."/>
            <person name="Zhou J."/>
            <person name="Richardson P."/>
            <person name="Fields M.W."/>
        </authorList>
    </citation>
    <scope>NUCLEOTIDE SEQUENCE [LARGE SCALE GENOMIC DNA]</scope>
    <source>
        <strain>QYMF</strain>
    </source>
</reference>
<comment type="function">
    <text evidence="1">Converts the preformed base xanthine, a product of nucleic acid breakdown, to xanthosine 5'-monophosphate (XMP), so it can be reused for RNA or DNA synthesis.</text>
</comment>
<comment type="catalytic activity">
    <reaction evidence="1">
        <text>XMP + diphosphate = xanthine + 5-phospho-alpha-D-ribose 1-diphosphate</text>
        <dbReference type="Rhea" id="RHEA:10800"/>
        <dbReference type="ChEBI" id="CHEBI:17712"/>
        <dbReference type="ChEBI" id="CHEBI:33019"/>
        <dbReference type="ChEBI" id="CHEBI:57464"/>
        <dbReference type="ChEBI" id="CHEBI:58017"/>
        <dbReference type="EC" id="2.4.2.22"/>
    </reaction>
</comment>
<comment type="pathway">
    <text evidence="1">Purine metabolism; XMP biosynthesis via salvage pathway; XMP from xanthine: step 1/1.</text>
</comment>
<comment type="subunit">
    <text evidence="1">Homodimer.</text>
</comment>
<comment type="subcellular location">
    <subcellularLocation>
        <location evidence="1">Cytoplasm</location>
    </subcellularLocation>
</comment>
<comment type="similarity">
    <text evidence="1">Belongs to the purine/pyrimidine phosphoribosyltransferase family. Xpt subfamily.</text>
</comment>
<feature type="chain" id="PRO_0000339657" description="Xanthine phosphoribosyltransferase">
    <location>
        <begin position="1"/>
        <end position="202"/>
    </location>
</feature>
<feature type="binding site" evidence="1">
    <location>
        <position position="20"/>
    </location>
    <ligand>
        <name>xanthine</name>
        <dbReference type="ChEBI" id="CHEBI:17712"/>
    </ligand>
</feature>
<feature type="binding site" evidence="1">
    <location>
        <position position="27"/>
    </location>
    <ligand>
        <name>xanthine</name>
        <dbReference type="ChEBI" id="CHEBI:17712"/>
    </ligand>
</feature>
<feature type="binding site" evidence="1">
    <location>
        <begin position="128"/>
        <end position="132"/>
    </location>
    <ligand>
        <name>5-phospho-alpha-D-ribose 1-diphosphate</name>
        <dbReference type="ChEBI" id="CHEBI:58017"/>
    </ligand>
</feature>
<feature type="binding site" evidence="1">
    <location>
        <position position="156"/>
    </location>
    <ligand>
        <name>xanthine</name>
        <dbReference type="ChEBI" id="CHEBI:17712"/>
    </ligand>
</feature>
<protein>
    <recommendedName>
        <fullName evidence="1">Xanthine phosphoribosyltransferase</fullName>
        <shortName evidence="1">XPRTase</shortName>
        <ecNumber evidence="1">2.4.2.22</ecNumber>
    </recommendedName>
</protein>
<proteinExistence type="inferred from homology"/>
<gene>
    <name evidence="1" type="primary">xpt</name>
    <name type="ordered locus">Amet_3326</name>
</gene>